<comment type="function">
    <text evidence="1">Could be a nuclease involved in processing of the 5'-end of pre-16S rRNA.</text>
</comment>
<comment type="subcellular location">
    <subcellularLocation>
        <location evidence="1">Cytoplasm</location>
    </subcellularLocation>
</comment>
<comment type="similarity">
    <text evidence="1">Belongs to the YqgF nuclease family.</text>
</comment>
<feature type="chain" id="PRO_0000257542" description="Putative pre-16S rRNA nuclease">
    <location>
        <begin position="1"/>
        <end position="142"/>
    </location>
</feature>
<sequence>MRLLGLDVGSKTIGVAVSDPLGITAQSVMTIPIDEDRHNFGMRSLKKLVREYEANGFVLGLPKNMDGTAGRSVSRSKAMGERLEQKFGLPVYYDDERLTTVASERILVEEAGMHDRRQRKEVVDQMAAVLILQNYLDLQRKE</sequence>
<organism>
    <name type="scientific">Lactobacillus delbrueckii subsp. bulgaricus (strain ATCC 11842 / DSM 20081 / BCRC 10696 / JCM 1002 / NBRC 13953 / NCIMB 11778 / NCTC 12712 / WDCM 00102 / Lb 14)</name>
    <dbReference type="NCBI Taxonomy" id="390333"/>
    <lineage>
        <taxon>Bacteria</taxon>
        <taxon>Bacillati</taxon>
        <taxon>Bacillota</taxon>
        <taxon>Bacilli</taxon>
        <taxon>Lactobacillales</taxon>
        <taxon>Lactobacillaceae</taxon>
        <taxon>Lactobacillus</taxon>
    </lineage>
</organism>
<dbReference type="EC" id="3.1.-.-" evidence="1"/>
<dbReference type="EMBL" id="CR954253">
    <property type="protein sequence ID" value="CAI98394.1"/>
    <property type="molecule type" value="Genomic_DNA"/>
</dbReference>
<dbReference type="RefSeq" id="WP_011544113.1">
    <property type="nucleotide sequence ID" value="NC_008054.1"/>
</dbReference>
<dbReference type="SMR" id="Q1G949"/>
<dbReference type="STRING" id="390333.Ldb1605"/>
<dbReference type="KEGG" id="ldb:Ldb1605"/>
<dbReference type="PATRIC" id="fig|390333.13.peg.1019"/>
<dbReference type="eggNOG" id="COG0816">
    <property type="taxonomic scope" value="Bacteria"/>
</dbReference>
<dbReference type="HOGENOM" id="CLU_098240_2_0_9"/>
<dbReference type="BioCyc" id="LDEL390333:LDB_RS06930-MONOMER"/>
<dbReference type="Proteomes" id="UP000001259">
    <property type="component" value="Chromosome"/>
</dbReference>
<dbReference type="GO" id="GO:0005829">
    <property type="term" value="C:cytosol"/>
    <property type="evidence" value="ECO:0007669"/>
    <property type="project" value="TreeGrafter"/>
</dbReference>
<dbReference type="GO" id="GO:0004518">
    <property type="term" value="F:nuclease activity"/>
    <property type="evidence" value="ECO:0007669"/>
    <property type="project" value="UniProtKB-KW"/>
</dbReference>
<dbReference type="GO" id="GO:0000967">
    <property type="term" value="P:rRNA 5'-end processing"/>
    <property type="evidence" value="ECO:0007669"/>
    <property type="project" value="UniProtKB-UniRule"/>
</dbReference>
<dbReference type="CDD" id="cd16964">
    <property type="entry name" value="YqgF"/>
    <property type="match status" value="1"/>
</dbReference>
<dbReference type="Gene3D" id="3.30.420.140">
    <property type="entry name" value="YqgF/RNase H-like domain"/>
    <property type="match status" value="1"/>
</dbReference>
<dbReference type="HAMAP" id="MF_00651">
    <property type="entry name" value="Nuclease_YqgF"/>
    <property type="match status" value="1"/>
</dbReference>
<dbReference type="InterPro" id="IPR012337">
    <property type="entry name" value="RNaseH-like_sf"/>
</dbReference>
<dbReference type="InterPro" id="IPR005227">
    <property type="entry name" value="YqgF"/>
</dbReference>
<dbReference type="InterPro" id="IPR006641">
    <property type="entry name" value="YqgF/RNaseH-like_dom"/>
</dbReference>
<dbReference type="InterPro" id="IPR037027">
    <property type="entry name" value="YqgF/RNaseH-like_dom_sf"/>
</dbReference>
<dbReference type="NCBIfam" id="TIGR00250">
    <property type="entry name" value="RNAse_H_YqgF"/>
    <property type="match status" value="1"/>
</dbReference>
<dbReference type="PANTHER" id="PTHR33317">
    <property type="entry name" value="POLYNUCLEOTIDYL TRANSFERASE, RIBONUCLEASE H-LIKE SUPERFAMILY PROTEIN"/>
    <property type="match status" value="1"/>
</dbReference>
<dbReference type="PANTHER" id="PTHR33317:SF4">
    <property type="entry name" value="POLYNUCLEOTIDYL TRANSFERASE, RIBONUCLEASE H-LIKE SUPERFAMILY PROTEIN"/>
    <property type="match status" value="1"/>
</dbReference>
<dbReference type="Pfam" id="PF03652">
    <property type="entry name" value="RuvX"/>
    <property type="match status" value="1"/>
</dbReference>
<dbReference type="SMART" id="SM00732">
    <property type="entry name" value="YqgFc"/>
    <property type="match status" value="1"/>
</dbReference>
<dbReference type="SUPFAM" id="SSF53098">
    <property type="entry name" value="Ribonuclease H-like"/>
    <property type="match status" value="1"/>
</dbReference>
<protein>
    <recommendedName>
        <fullName evidence="1">Putative pre-16S rRNA nuclease</fullName>
        <ecNumber evidence="1">3.1.-.-</ecNumber>
    </recommendedName>
</protein>
<reference key="1">
    <citation type="journal article" date="2006" name="Proc. Natl. Acad. Sci. U.S.A.">
        <title>The complete genome sequence of Lactobacillus bulgaricus reveals extensive and ongoing reductive evolution.</title>
        <authorList>
            <person name="van de Guchte M."/>
            <person name="Penaud S."/>
            <person name="Grimaldi C."/>
            <person name="Barbe V."/>
            <person name="Bryson K."/>
            <person name="Nicolas P."/>
            <person name="Robert C."/>
            <person name="Oztas S."/>
            <person name="Mangenot S."/>
            <person name="Couloux A."/>
            <person name="Loux V."/>
            <person name="Dervyn R."/>
            <person name="Bossy R."/>
            <person name="Bolotin A."/>
            <person name="Batto J.-M."/>
            <person name="Walunas T."/>
            <person name="Gibrat J.-F."/>
            <person name="Bessieres P."/>
            <person name="Weissenbach J."/>
            <person name="Ehrlich S.D."/>
            <person name="Maguin E."/>
        </authorList>
    </citation>
    <scope>NUCLEOTIDE SEQUENCE [LARGE SCALE GENOMIC DNA]</scope>
    <source>
        <strain>ATCC 11842 / DSM 20081 / BCRC 10696 / JCM 1002 / NBRC 13953 / NCIMB 11778 / NCTC 12712 / WDCM 00102 / Lb 14</strain>
    </source>
</reference>
<name>YQGF_LACDA</name>
<accession>Q1G949</accession>
<proteinExistence type="inferred from homology"/>
<keyword id="KW-0963">Cytoplasm</keyword>
<keyword id="KW-0378">Hydrolase</keyword>
<keyword id="KW-0540">Nuclease</keyword>
<keyword id="KW-1185">Reference proteome</keyword>
<keyword id="KW-0690">Ribosome biogenesis</keyword>
<evidence type="ECO:0000255" key="1">
    <source>
        <dbReference type="HAMAP-Rule" id="MF_00651"/>
    </source>
</evidence>
<gene>
    <name type="ordered locus">Ldb1605</name>
</gene>